<dbReference type="EC" id="1.14.15.30" evidence="3"/>
<dbReference type="EMBL" id="FJ238096">
    <property type="protein sequence ID" value="ACI62781.1"/>
    <property type="molecule type" value="Genomic_DNA"/>
</dbReference>
<dbReference type="RefSeq" id="WP_016690904.1">
    <property type="nucleotide sequence ID" value="NZ_JASIRK010000011.1"/>
</dbReference>
<dbReference type="SMR" id="B6V6V6"/>
<dbReference type="STRING" id="1829.GCA_000716895_05284"/>
<dbReference type="BioCyc" id="MetaCyc:MONOMER-16922"/>
<dbReference type="UniPathway" id="UPA01058"/>
<dbReference type="GO" id="GO:0051537">
    <property type="term" value="F:2 iron, 2 sulfur cluster binding"/>
    <property type="evidence" value="ECO:0007669"/>
    <property type="project" value="UniProtKB-KW"/>
</dbReference>
<dbReference type="GO" id="GO:0036200">
    <property type="term" value="F:3-ketosteroid 9-alpha-monooxygenase activity"/>
    <property type="evidence" value="ECO:0000314"/>
    <property type="project" value="UniProtKB"/>
</dbReference>
<dbReference type="GO" id="GO:0071949">
    <property type="term" value="F:FAD binding"/>
    <property type="evidence" value="ECO:0000314"/>
    <property type="project" value="UniProtKB"/>
</dbReference>
<dbReference type="GO" id="GO:0046872">
    <property type="term" value="F:metal ion binding"/>
    <property type="evidence" value="ECO:0007669"/>
    <property type="project" value="UniProtKB-KW"/>
</dbReference>
<dbReference type="GO" id="GO:0006707">
    <property type="term" value="P:cholesterol catabolic process"/>
    <property type="evidence" value="ECO:0000303"/>
    <property type="project" value="UniProtKB"/>
</dbReference>
<dbReference type="CDD" id="cd00207">
    <property type="entry name" value="fer2"/>
    <property type="match status" value="1"/>
</dbReference>
<dbReference type="CDD" id="cd06214">
    <property type="entry name" value="PA_degradation_oxidoreductase_like"/>
    <property type="match status" value="1"/>
</dbReference>
<dbReference type="FunFam" id="3.10.20.30:FF:000023">
    <property type="entry name" value="3-ketosteroid-9-alpha-hydroxylase reductase subunit"/>
    <property type="match status" value="1"/>
</dbReference>
<dbReference type="Gene3D" id="3.10.20.30">
    <property type="match status" value="1"/>
</dbReference>
<dbReference type="Gene3D" id="3.40.50.80">
    <property type="entry name" value="Nucleotide-binding domain of ferredoxin-NADP reductase (FNR) module"/>
    <property type="match status" value="1"/>
</dbReference>
<dbReference type="Gene3D" id="2.40.30.10">
    <property type="entry name" value="Translation factors"/>
    <property type="match status" value="1"/>
</dbReference>
<dbReference type="InterPro" id="IPR036010">
    <property type="entry name" value="2Fe-2S_ferredoxin-like_sf"/>
</dbReference>
<dbReference type="InterPro" id="IPR001041">
    <property type="entry name" value="2Fe-2S_ferredoxin-type"/>
</dbReference>
<dbReference type="InterPro" id="IPR006058">
    <property type="entry name" value="2Fe2S_fd_BS"/>
</dbReference>
<dbReference type="InterPro" id="IPR012675">
    <property type="entry name" value="Beta-grasp_dom_sf"/>
</dbReference>
<dbReference type="InterPro" id="IPR008333">
    <property type="entry name" value="Cbr1-like_FAD-bd_dom"/>
</dbReference>
<dbReference type="InterPro" id="IPR017927">
    <property type="entry name" value="FAD-bd_FR_type"/>
</dbReference>
<dbReference type="InterPro" id="IPR001709">
    <property type="entry name" value="Flavoprot_Pyr_Nucl_cyt_Rdtase"/>
</dbReference>
<dbReference type="InterPro" id="IPR039261">
    <property type="entry name" value="FNR_nucleotide-bd"/>
</dbReference>
<dbReference type="InterPro" id="IPR050415">
    <property type="entry name" value="MRET"/>
</dbReference>
<dbReference type="InterPro" id="IPR001433">
    <property type="entry name" value="OxRdtase_FAD/NAD-bd"/>
</dbReference>
<dbReference type="InterPro" id="IPR017938">
    <property type="entry name" value="Riboflavin_synthase-like_b-brl"/>
</dbReference>
<dbReference type="PANTHER" id="PTHR47354:SF8">
    <property type="entry name" value="1,2-PHENYLACETYL-COA EPOXIDASE, SUBUNIT E"/>
    <property type="match status" value="1"/>
</dbReference>
<dbReference type="PANTHER" id="PTHR47354">
    <property type="entry name" value="NADH OXIDOREDUCTASE HCR"/>
    <property type="match status" value="1"/>
</dbReference>
<dbReference type="Pfam" id="PF00970">
    <property type="entry name" value="FAD_binding_6"/>
    <property type="match status" value="1"/>
</dbReference>
<dbReference type="Pfam" id="PF00111">
    <property type="entry name" value="Fer2"/>
    <property type="match status" value="1"/>
</dbReference>
<dbReference type="Pfam" id="PF00175">
    <property type="entry name" value="NAD_binding_1"/>
    <property type="match status" value="1"/>
</dbReference>
<dbReference type="PRINTS" id="PR00371">
    <property type="entry name" value="FPNCR"/>
</dbReference>
<dbReference type="PRINTS" id="PR00410">
    <property type="entry name" value="PHEHYDRXLASE"/>
</dbReference>
<dbReference type="SUPFAM" id="SSF54292">
    <property type="entry name" value="2Fe-2S ferredoxin-like"/>
    <property type="match status" value="1"/>
</dbReference>
<dbReference type="SUPFAM" id="SSF52343">
    <property type="entry name" value="Ferredoxin reductase-like, C-terminal NADP-linked domain"/>
    <property type="match status" value="1"/>
</dbReference>
<dbReference type="SUPFAM" id="SSF63380">
    <property type="entry name" value="Riboflavin synthase domain-like"/>
    <property type="match status" value="1"/>
</dbReference>
<dbReference type="PROSITE" id="PS00197">
    <property type="entry name" value="2FE2S_FER_1"/>
    <property type="match status" value="1"/>
</dbReference>
<dbReference type="PROSITE" id="PS51085">
    <property type="entry name" value="2FE2S_FER_2"/>
    <property type="match status" value="1"/>
</dbReference>
<dbReference type="PROSITE" id="PS51384">
    <property type="entry name" value="FAD_FR"/>
    <property type="match status" value="1"/>
</dbReference>
<gene>
    <name evidence="4" type="primary">kshB</name>
</gene>
<evidence type="ECO:0000255" key="1">
    <source>
        <dbReference type="PROSITE-ProRule" id="PRU00465"/>
    </source>
</evidence>
<evidence type="ECO:0000255" key="2">
    <source>
        <dbReference type="PROSITE-ProRule" id="PRU00716"/>
    </source>
</evidence>
<evidence type="ECO:0000269" key="3">
    <source>
    </source>
</evidence>
<evidence type="ECO:0000303" key="4">
    <source>
    </source>
</evidence>
<evidence type="ECO:0000305" key="5">
    <source>
    </source>
</evidence>
<feature type="chain" id="PRO_0000438404" description="3-ketosteroid-9-alpha-monooxygenase, ferredoxin reductase component">
    <location>
        <begin position="1"/>
        <end position="351"/>
    </location>
</feature>
<feature type="domain" description="FAD-binding FR-type" evidence="2">
    <location>
        <begin position="10"/>
        <end position="116"/>
    </location>
</feature>
<feature type="domain" description="2Fe-2S ferredoxin-type" evidence="1">
    <location>
        <begin position="264"/>
        <end position="351"/>
    </location>
</feature>
<feature type="binding site" evidence="1">
    <location>
        <position position="300"/>
    </location>
    <ligand>
        <name>[2Fe-2S] cluster</name>
        <dbReference type="ChEBI" id="CHEBI:190135"/>
    </ligand>
</feature>
<feature type="binding site" evidence="1">
    <location>
        <position position="305"/>
    </location>
    <ligand>
        <name>[2Fe-2S] cluster</name>
        <dbReference type="ChEBI" id="CHEBI:190135"/>
    </ligand>
</feature>
<feature type="binding site" evidence="1">
    <location>
        <position position="308"/>
    </location>
    <ligand>
        <name>[2Fe-2S] cluster</name>
        <dbReference type="ChEBI" id="CHEBI:190135"/>
    </ligand>
</feature>
<feature type="binding site" evidence="1">
    <location>
        <position position="338"/>
    </location>
    <ligand>
        <name>[2Fe-2S] cluster</name>
        <dbReference type="ChEBI" id="CHEBI:190135"/>
    </ligand>
</feature>
<organism>
    <name type="scientific">Rhodococcus rhodochrous</name>
    <dbReference type="NCBI Taxonomy" id="1829"/>
    <lineage>
        <taxon>Bacteria</taxon>
        <taxon>Bacillati</taxon>
        <taxon>Actinomycetota</taxon>
        <taxon>Actinomycetes</taxon>
        <taxon>Mycobacteriales</taxon>
        <taxon>Nocardiaceae</taxon>
        <taxon>Rhodococcus</taxon>
    </lineage>
</organism>
<sequence>MTTVEVPHGSRSVILTVSAVVEETADTRSIVFAVPDELRDKFAYRPGQFLTLRIPSDRTGSVARCYSLASSPFTDDAPKVTVKRTSDGYGSNWLCDNIATGQTLEVLPPAGVFTPKSLDHDFLLFGAGSGITPVISILKSALTQGGGKVVLVYANRDEKSVIFAEELRALAEKYPTRLTVVHWLESVQGLPTADQLAAIAAPYESYEAFMCGPGPFMDTVHQALNTVGMPRARVHAEVFNSLSGDPFADQAPVEVSDEDAADAATVEVELDGEVHKLSWPRKQTLVDIMLAKGIDVPYSCQEGECGSCACTVLEGKVEMENCDVLDPEDIEAGYILGCQARPVTDHLKIEF</sequence>
<reference key="1">
    <citation type="journal article" date="2009" name="Appl. Environ. Microbiol.">
        <title>Rhodococcus rhodochrous DSM 43269 3-ketosteroid 9alpha-hydroxylase, a two-component iron-sulfur-containing monooxygenase with subtle steroid substrate specificity.</title>
        <authorList>
            <person name="Petrusma M."/>
            <person name="Dijkhuizen L."/>
            <person name="van der Geize R."/>
        </authorList>
    </citation>
    <scope>NUCLEOTIDE SEQUENCE [GENOMIC DNA]</scope>
    <scope>FUNCTION</scope>
    <scope>CATALYTIC ACTIVITY</scope>
    <scope>BIOPHYSICOCHEMICAL PROPERTIES</scope>
    <scope>COFACTOR</scope>
    <scope>ACTIVITY REGULATION</scope>
    <scope>SUBUNIT</scope>
    <scope>SUBSTRATE SPECIFICITY</scope>
    <source>
        <strain>DSM 43269</strain>
    </source>
</reference>
<proteinExistence type="evidence at protein level"/>
<protein>
    <recommendedName>
        <fullName evidence="4">3-ketosteroid-9-alpha-monooxygenase, ferredoxin reductase component</fullName>
    </recommendedName>
    <alternativeName>
        <fullName evidence="4">3-ketosteroid-9-alpha-hydroxylase, ferredoxin reductase component</fullName>
        <shortName evidence="4">KSH</shortName>
    </alternativeName>
    <alternativeName>
        <fullName evidence="4">Androsta-1,4-diene-3,17-dione 9-alpha-hydroxylase</fullName>
        <ecNumber evidence="3">1.14.15.30</ecNumber>
    </alternativeName>
    <alternativeName>
        <fullName evidence="5">Rieske-type oxygenase</fullName>
        <shortName evidence="5">RO</shortName>
    </alternativeName>
</protein>
<comment type="function">
    <text evidence="3">Probably involved in the degradation of cholesterol. In vitro, catalyzes the introduction of a 9alpha-hydroxyl moiety into the ring B of 3-ketosteroid substrates such as 1,4-androstadiene-3,17-dione (ADD), 4-androstene-3,17-dione (AD), 4-androstene-17beta-ol-3-one (testosterone), 4-pregnene-3,20-dione (progesterone), 19-nor-4-androstene-3,17-dione (nordion), 1-(5alpha)-androstene-3,17-dione, 5alpha-androstane-3,17-dione and 5beta-androstane-3,17-dione. KSH has the highest activity with 3-keto-Delta4 steroid substrates.</text>
</comment>
<comment type="catalytic activity">
    <reaction evidence="3">
        <text>androsta-1,4-diene-3,17-dione + 2 reduced [2Fe-2S]-[ferredoxin] + O2 + 2 H(+) = 9alpha-hydroxyandrosta-1,4-diene-3,17-dione + 2 oxidized [2Fe-2S]-[ferredoxin] + H2O</text>
        <dbReference type="Rhea" id="RHEA:32199"/>
        <dbReference type="Rhea" id="RHEA-COMP:10000"/>
        <dbReference type="Rhea" id="RHEA-COMP:10001"/>
        <dbReference type="ChEBI" id="CHEBI:15377"/>
        <dbReference type="ChEBI" id="CHEBI:15378"/>
        <dbReference type="ChEBI" id="CHEBI:15379"/>
        <dbReference type="ChEBI" id="CHEBI:33737"/>
        <dbReference type="ChEBI" id="CHEBI:33738"/>
        <dbReference type="ChEBI" id="CHEBI:40799"/>
        <dbReference type="ChEBI" id="CHEBI:63641"/>
        <dbReference type="EC" id="1.14.15.30"/>
    </reaction>
</comment>
<comment type="cofactor">
    <cofactor evidence="3">
        <name>FAD</name>
        <dbReference type="ChEBI" id="CHEBI:57692"/>
    </cofactor>
    <text evidence="3">Binds 1 FAD per subunit.</text>
</comment>
<comment type="cofactor">
    <cofactor evidence="1">
        <name>[2Fe-2S] cluster</name>
        <dbReference type="ChEBI" id="CHEBI:190135"/>
    </cofactor>
    <text evidence="1">Binds 1 2Fe-2S cluster.</text>
</comment>
<comment type="activity regulation">
    <text evidence="3">KSH activity is completely inhibited by zinc ions. KshB is specifically inhibited by Cu(2+) ions.</text>
</comment>
<comment type="biophysicochemical properties">
    <kinetics>
        <KM evidence="3">10 uM for 19-nor-AD</KM>
        <KM evidence="3">23 uM for 5alpha-androstane-3,17-dione</KM>
        <KM evidence="3">33 uM for 5beta-androstane-3,17-dione</KM>
    </kinetics>
    <phDependence>
        <text evidence="3">Optimum pH is 7.</text>
    </phDependence>
    <temperatureDependence>
        <text evidence="3">Optimum temperature is 33 degrees Celsius.</text>
    </temperatureDependence>
</comment>
<comment type="pathway">
    <text evidence="5">Steroid metabolism; cholesterol degradation.</text>
</comment>
<comment type="subunit">
    <text evidence="3">The two-component system 3-ketosteroid-9-alpha-monooxygenase is composed of an oxygenase component KshA and a reductase component KshB.</text>
</comment>
<name>KSHB_RHORH</name>
<keyword id="KW-0001">2Fe-2S</keyword>
<keyword id="KW-0153">Cholesterol metabolism</keyword>
<keyword id="KW-0274">FAD</keyword>
<keyword id="KW-0285">Flavoprotein</keyword>
<keyword id="KW-0408">Iron</keyword>
<keyword id="KW-0411">Iron-sulfur</keyword>
<keyword id="KW-0442">Lipid degradation</keyword>
<keyword id="KW-0443">Lipid metabolism</keyword>
<keyword id="KW-0479">Metal-binding</keyword>
<keyword id="KW-0560">Oxidoreductase</keyword>
<keyword id="KW-0753">Steroid metabolism</keyword>
<keyword id="KW-1207">Sterol metabolism</keyword>
<accession>B6V6V6</accession>